<keyword id="KW-0240">DNA-directed RNA polymerase</keyword>
<keyword id="KW-0548">Nucleotidyltransferase</keyword>
<keyword id="KW-0804">Transcription</keyword>
<keyword id="KW-0808">Transferase</keyword>
<evidence type="ECO:0000255" key="1">
    <source>
        <dbReference type="HAMAP-Rule" id="MF_00059"/>
    </source>
</evidence>
<evidence type="ECO:0000256" key="2">
    <source>
        <dbReference type="SAM" id="MobiDB-lite"/>
    </source>
</evidence>
<reference key="1">
    <citation type="journal article" date="2004" name="Science">
        <title>The complete genome sequence of Propionibacterium acnes, a commensal of human skin.</title>
        <authorList>
            <person name="Brueggemann H."/>
            <person name="Henne A."/>
            <person name="Hoster F."/>
            <person name="Liesegang H."/>
            <person name="Wiezer A."/>
            <person name="Strittmatter A."/>
            <person name="Hujer S."/>
            <person name="Duerre P."/>
            <person name="Gottschalk G."/>
        </authorList>
    </citation>
    <scope>NUCLEOTIDE SEQUENCE [LARGE SCALE GENOMIC DNA]</scope>
    <source>
        <strain>DSM 16379 / KPA171202</strain>
    </source>
</reference>
<organism>
    <name type="scientific">Cutibacterium acnes (strain DSM 16379 / KPA171202)</name>
    <name type="common">Propionibacterium acnes</name>
    <dbReference type="NCBI Taxonomy" id="267747"/>
    <lineage>
        <taxon>Bacteria</taxon>
        <taxon>Bacillati</taxon>
        <taxon>Actinomycetota</taxon>
        <taxon>Actinomycetes</taxon>
        <taxon>Propionibacteriales</taxon>
        <taxon>Propionibacteriaceae</taxon>
        <taxon>Cutibacterium</taxon>
    </lineage>
</organism>
<dbReference type="EC" id="2.7.7.6" evidence="1"/>
<dbReference type="EMBL" id="AE017283">
    <property type="protein sequence ID" value="AAT83552.1"/>
    <property type="molecule type" value="Genomic_DNA"/>
</dbReference>
<dbReference type="RefSeq" id="WP_002517587.1">
    <property type="nucleotide sequence ID" value="NZ_CP025935.1"/>
</dbReference>
<dbReference type="SMR" id="Q6A6R1"/>
<dbReference type="EnsemblBacteria" id="AAT83552">
    <property type="protein sequence ID" value="AAT83552"/>
    <property type="gene ID" value="PPA1826"/>
</dbReference>
<dbReference type="KEGG" id="pac:PPA1826"/>
<dbReference type="PATRIC" id="fig|267747.3.peg.1883"/>
<dbReference type="eggNOG" id="COG0202">
    <property type="taxonomic scope" value="Bacteria"/>
</dbReference>
<dbReference type="HOGENOM" id="CLU_053084_0_1_11"/>
<dbReference type="Proteomes" id="UP000000603">
    <property type="component" value="Chromosome"/>
</dbReference>
<dbReference type="GO" id="GO:0005737">
    <property type="term" value="C:cytoplasm"/>
    <property type="evidence" value="ECO:0007669"/>
    <property type="project" value="UniProtKB-ARBA"/>
</dbReference>
<dbReference type="GO" id="GO:0000428">
    <property type="term" value="C:DNA-directed RNA polymerase complex"/>
    <property type="evidence" value="ECO:0007669"/>
    <property type="project" value="UniProtKB-KW"/>
</dbReference>
<dbReference type="GO" id="GO:0003677">
    <property type="term" value="F:DNA binding"/>
    <property type="evidence" value="ECO:0007669"/>
    <property type="project" value="UniProtKB-UniRule"/>
</dbReference>
<dbReference type="GO" id="GO:0003899">
    <property type="term" value="F:DNA-directed RNA polymerase activity"/>
    <property type="evidence" value="ECO:0007669"/>
    <property type="project" value="UniProtKB-UniRule"/>
</dbReference>
<dbReference type="GO" id="GO:0046983">
    <property type="term" value="F:protein dimerization activity"/>
    <property type="evidence" value="ECO:0007669"/>
    <property type="project" value="InterPro"/>
</dbReference>
<dbReference type="GO" id="GO:0006351">
    <property type="term" value="P:DNA-templated transcription"/>
    <property type="evidence" value="ECO:0007669"/>
    <property type="project" value="UniProtKB-UniRule"/>
</dbReference>
<dbReference type="CDD" id="cd06928">
    <property type="entry name" value="RNAP_alpha_NTD"/>
    <property type="match status" value="1"/>
</dbReference>
<dbReference type="FunFam" id="1.10.150.20:FF:000001">
    <property type="entry name" value="DNA-directed RNA polymerase subunit alpha"/>
    <property type="match status" value="1"/>
</dbReference>
<dbReference type="FunFam" id="2.170.120.12:FF:000001">
    <property type="entry name" value="DNA-directed RNA polymerase subunit alpha"/>
    <property type="match status" value="1"/>
</dbReference>
<dbReference type="Gene3D" id="1.10.150.20">
    <property type="entry name" value="5' to 3' exonuclease, C-terminal subdomain"/>
    <property type="match status" value="1"/>
</dbReference>
<dbReference type="Gene3D" id="2.170.120.12">
    <property type="entry name" value="DNA-directed RNA polymerase, insert domain"/>
    <property type="match status" value="1"/>
</dbReference>
<dbReference type="Gene3D" id="3.30.1360.10">
    <property type="entry name" value="RNA polymerase, RBP11-like subunit"/>
    <property type="match status" value="1"/>
</dbReference>
<dbReference type="HAMAP" id="MF_00059">
    <property type="entry name" value="RNApol_bact_RpoA"/>
    <property type="match status" value="1"/>
</dbReference>
<dbReference type="InterPro" id="IPR011262">
    <property type="entry name" value="DNA-dir_RNA_pol_insert"/>
</dbReference>
<dbReference type="InterPro" id="IPR011263">
    <property type="entry name" value="DNA-dir_RNA_pol_RpoA/D/Rpb3"/>
</dbReference>
<dbReference type="InterPro" id="IPR011773">
    <property type="entry name" value="DNA-dir_RpoA"/>
</dbReference>
<dbReference type="InterPro" id="IPR036603">
    <property type="entry name" value="RBP11-like"/>
</dbReference>
<dbReference type="InterPro" id="IPR011260">
    <property type="entry name" value="RNAP_asu_C"/>
</dbReference>
<dbReference type="InterPro" id="IPR036643">
    <property type="entry name" value="RNApol_insert_sf"/>
</dbReference>
<dbReference type="NCBIfam" id="NF003513">
    <property type="entry name" value="PRK05182.1-2"/>
    <property type="match status" value="1"/>
</dbReference>
<dbReference type="NCBIfam" id="NF003514">
    <property type="entry name" value="PRK05182.1-4"/>
    <property type="match status" value="1"/>
</dbReference>
<dbReference type="NCBIfam" id="NF003519">
    <property type="entry name" value="PRK05182.2-5"/>
    <property type="match status" value="1"/>
</dbReference>
<dbReference type="NCBIfam" id="TIGR02027">
    <property type="entry name" value="rpoA"/>
    <property type="match status" value="1"/>
</dbReference>
<dbReference type="Pfam" id="PF01000">
    <property type="entry name" value="RNA_pol_A_bac"/>
    <property type="match status" value="1"/>
</dbReference>
<dbReference type="Pfam" id="PF03118">
    <property type="entry name" value="RNA_pol_A_CTD"/>
    <property type="match status" value="1"/>
</dbReference>
<dbReference type="Pfam" id="PF01193">
    <property type="entry name" value="RNA_pol_L"/>
    <property type="match status" value="1"/>
</dbReference>
<dbReference type="SMART" id="SM00662">
    <property type="entry name" value="RPOLD"/>
    <property type="match status" value="1"/>
</dbReference>
<dbReference type="SUPFAM" id="SSF47789">
    <property type="entry name" value="C-terminal domain of RNA polymerase alpha subunit"/>
    <property type="match status" value="1"/>
</dbReference>
<dbReference type="SUPFAM" id="SSF56553">
    <property type="entry name" value="Insert subdomain of RNA polymerase alpha subunit"/>
    <property type="match status" value="1"/>
</dbReference>
<dbReference type="SUPFAM" id="SSF55257">
    <property type="entry name" value="RBP11-like subunits of RNA polymerase"/>
    <property type="match status" value="1"/>
</dbReference>
<accession>Q6A6R1</accession>
<comment type="function">
    <text evidence="1">DNA-dependent RNA polymerase catalyzes the transcription of DNA into RNA using the four ribonucleoside triphosphates as substrates.</text>
</comment>
<comment type="catalytic activity">
    <reaction evidence="1">
        <text>RNA(n) + a ribonucleoside 5'-triphosphate = RNA(n+1) + diphosphate</text>
        <dbReference type="Rhea" id="RHEA:21248"/>
        <dbReference type="Rhea" id="RHEA-COMP:14527"/>
        <dbReference type="Rhea" id="RHEA-COMP:17342"/>
        <dbReference type="ChEBI" id="CHEBI:33019"/>
        <dbReference type="ChEBI" id="CHEBI:61557"/>
        <dbReference type="ChEBI" id="CHEBI:140395"/>
        <dbReference type="EC" id="2.7.7.6"/>
    </reaction>
</comment>
<comment type="subunit">
    <text evidence="1">Homodimer. The RNAP catalytic core consists of 2 alpha, 1 beta, 1 beta' and 1 omega subunit. When a sigma factor is associated with the core the holoenzyme is formed, which can initiate transcription.</text>
</comment>
<comment type="domain">
    <text evidence="1">The N-terminal domain is essential for RNAP assembly and basal transcription, whereas the C-terminal domain is involved in interaction with transcriptional regulators and with upstream promoter elements.</text>
</comment>
<comment type="similarity">
    <text evidence="1">Belongs to the RNA polymerase alpha chain family.</text>
</comment>
<protein>
    <recommendedName>
        <fullName evidence="1">DNA-directed RNA polymerase subunit alpha</fullName>
        <shortName evidence="1">RNAP subunit alpha</shortName>
        <ecNumber evidence="1">2.7.7.6</ecNumber>
    </recommendedName>
    <alternativeName>
        <fullName evidence="1">RNA polymerase subunit alpha</fullName>
    </alternativeName>
    <alternativeName>
        <fullName evidence="1">Transcriptase subunit alpha</fullName>
    </alternativeName>
</protein>
<proteinExistence type="inferred from homology"/>
<feature type="chain" id="PRO_0000175355" description="DNA-directed RNA polymerase subunit alpha">
    <location>
        <begin position="1"/>
        <end position="338"/>
    </location>
</feature>
<feature type="region of interest" description="Alpha N-terminal domain (alpha-NTD)" evidence="1">
    <location>
        <begin position="1"/>
        <end position="226"/>
    </location>
</feature>
<feature type="region of interest" description="Alpha C-terminal domain (alpha-CTD)" evidence="1">
    <location>
        <begin position="243"/>
        <end position="338"/>
    </location>
</feature>
<feature type="region of interest" description="Disordered" evidence="2">
    <location>
        <begin position="319"/>
        <end position="338"/>
    </location>
</feature>
<feature type="compositionally biased region" description="Acidic residues" evidence="2">
    <location>
        <begin position="323"/>
        <end position="338"/>
    </location>
</feature>
<gene>
    <name evidence="1" type="primary">rpoA</name>
    <name type="ordered locus">PPA1826</name>
</gene>
<name>RPOA_CUTAK</name>
<sequence>MLIAQRPTLTEESISEFRSKFVIEPLEPGFGYTIGNSLRRTLLSSIPGASVTSIKIEGVQHEFSTIEGCVEDVTEIILNLKGLVLSSEEDEPVAMYLRKTGAGEITAADINPPAGVTIHNPELHIATLNDDGRFEMELIVERGRGYVSSALNDDPNAEIGRIAVDSIYSPVLKVTYKVEATRVEQRTDFDKLVVDVETKPSILPRDAIASAGKTLVELFGLTRELNVEAEGIEIGSGPVDEEYAESLGTPVEELNLTVRSYNCLKREGIHTVGELVSRSEQDLLAIRNFGSKSIDEVKEKLTELGLALKDSAPGFDPLAAAEAYDEANDDDYAETEQY</sequence>